<organism>
    <name type="scientific">Clavibacter michiganensis subsp. michiganensis (strain NCPPB 382)</name>
    <dbReference type="NCBI Taxonomy" id="443906"/>
    <lineage>
        <taxon>Bacteria</taxon>
        <taxon>Bacillati</taxon>
        <taxon>Actinomycetota</taxon>
        <taxon>Actinomycetes</taxon>
        <taxon>Micrococcales</taxon>
        <taxon>Microbacteriaceae</taxon>
        <taxon>Clavibacter</taxon>
    </lineage>
</organism>
<proteinExistence type="inferred from homology"/>
<dbReference type="EC" id="2.7.4.3" evidence="1"/>
<dbReference type="EMBL" id="AM711867">
    <property type="protein sequence ID" value="CAN02680.1"/>
    <property type="molecule type" value="Genomic_DNA"/>
</dbReference>
<dbReference type="RefSeq" id="WP_012039286.1">
    <property type="nucleotide sequence ID" value="NC_009480.1"/>
</dbReference>
<dbReference type="SMR" id="A5CU93"/>
<dbReference type="KEGG" id="cmi:CMM_2597"/>
<dbReference type="eggNOG" id="COG0563">
    <property type="taxonomic scope" value="Bacteria"/>
</dbReference>
<dbReference type="HOGENOM" id="CLU_032354_4_1_11"/>
<dbReference type="OrthoDB" id="9805030at2"/>
<dbReference type="UniPathway" id="UPA00588">
    <property type="reaction ID" value="UER00649"/>
</dbReference>
<dbReference type="Proteomes" id="UP000001564">
    <property type="component" value="Chromosome"/>
</dbReference>
<dbReference type="GO" id="GO:0005737">
    <property type="term" value="C:cytoplasm"/>
    <property type="evidence" value="ECO:0007669"/>
    <property type="project" value="UniProtKB-SubCell"/>
</dbReference>
<dbReference type="GO" id="GO:0004017">
    <property type="term" value="F:adenylate kinase activity"/>
    <property type="evidence" value="ECO:0007669"/>
    <property type="project" value="UniProtKB-UniRule"/>
</dbReference>
<dbReference type="GO" id="GO:0005524">
    <property type="term" value="F:ATP binding"/>
    <property type="evidence" value="ECO:0007669"/>
    <property type="project" value="UniProtKB-UniRule"/>
</dbReference>
<dbReference type="GO" id="GO:0044209">
    <property type="term" value="P:AMP salvage"/>
    <property type="evidence" value="ECO:0007669"/>
    <property type="project" value="UniProtKB-UniRule"/>
</dbReference>
<dbReference type="CDD" id="cd01428">
    <property type="entry name" value="ADK"/>
    <property type="match status" value="1"/>
</dbReference>
<dbReference type="Gene3D" id="3.40.50.300">
    <property type="entry name" value="P-loop containing nucleotide triphosphate hydrolases"/>
    <property type="match status" value="1"/>
</dbReference>
<dbReference type="HAMAP" id="MF_00235">
    <property type="entry name" value="Adenylate_kinase_Adk"/>
    <property type="match status" value="1"/>
</dbReference>
<dbReference type="InterPro" id="IPR000850">
    <property type="entry name" value="Adenylat/UMP-CMP_kin"/>
</dbReference>
<dbReference type="InterPro" id="IPR033690">
    <property type="entry name" value="Adenylat_kinase_CS"/>
</dbReference>
<dbReference type="InterPro" id="IPR027417">
    <property type="entry name" value="P-loop_NTPase"/>
</dbReference>
<dbReference type="NCBIfam" id="NF001381">
    <property type="entry name" value="PRK00279.1-3"/>
    <property type="match status" value="1"/>
</dbReference>
<dbReference type="NCBIfam" id="NF011100">
    <property type="entry name" value="PRK14527.1"/>
    <property type="match status" value="1"/>
</dbReference>
<dbReference type="NCBIfam" id="NF011104">
    <property type="entry name" value="PRK14531.1"/>
    <property type="match status" value="1"/>
</dbReference>
<dbReference type="NCBIfam" id="NF011105">
    <property type="entry name" value="PRK14532.1"/>
    <property type="match status" value="1"/>
</dbReference>
<dbReference type="PANTHER" id="PTHR23359">
    <property type="entry name" value="NUCLEOTIDE KINASE"/>
    <property type="match status" value="1"/>
</dbReference>
<dbReference type="Pfam" id="PF00406">
    <property type="entry name" value="ADK"/>
    <property type="match status" value="1"/>
</dbReference>
<dbReference type="PRINTS" id="PR00094">
    <property type="entry name" value="ADENYLTKNASE"/>
</dbReference>
<dbReference type="SUPFAM" id="SSF52540">
    <property type="entry name" value="P-loop containing nucleoside triphosphate hydrolases"/>
    <property type="match status" value="1"/>
</dbReference>
<dbReference type="PROSITE" id="PS00113">
    <property type="entry name" value="ADENYLATE_KINASE"/>
    <property type="match status" value="1"/>
</dbReference>
<reference key="1">
    <citation type="journal article" date="2008" name="J. Bacteriol.">
        <title>The genome sequence of the tomato-pathogenic actinomycete Clavibacter michiganensis subsp. michiganensis NCPPB382 reveals a large island involved in pathogenicity.</title>
        <authorList>
            <person name="Gartemann K.-H."/>
            <person name="Abt B."/>
            <person name="Bekel T."/>
            <person name="Burger A."/>
            <person name="Engemann J."/>
            <person name="Fluegel M."/>
            <person name="Gaigalat L."/>
            <person name="Goesmann A."/>
            <person name="Graefen I."/>
            <person name="Kalinowski J."/>
            <person name="Kaup O."/>
            <person name="Kirchner O."/>
            <person name="Krause L."/>
            <person name="Linke B."/>
            <person name="McHardy A."/>
            <person name="Meyer F."/>
            <person name="Pohle S."/>
            <person name="Rueckert C."/>
            <person name="Schneiker S."/>
            <person name="Zellermann E.-M."/>
            <person name="Puehler A."/>
            <person name="Eichenlaub R."/>
            <person name="Kaiser O."/>
            <person name="Bartels D."/>
        </authorList>
    </citation>
    <scope>NUCLEOTIDE SEQUENCE [LARGE SCALE GENOMIC DNA]</scope>
    <source>
        <strain>NCPPB 382</strain>
    </source>
</reference>
<feature type="chain" id="PRO_1000204400" description="Adenylate kinase">
    <location>
        <begin position="1"/>
        <end position="200"/>
    </location>
</feature>
<feature type="region of interest" description="NMP" evidence="1">
    <location>
        <begin position="31"/>
        <end position="60"/>
    </location>
</feature>
<feature type="region of interest" description="LID" evidence="1">
    <location>
        <begin position="127"/>
        <end position="137"/>
    </location>
</feature>
<feature type="binding site" evidence="1">
    <location>
        <begin position="11"/>
        <end position="16"/>
    </location>
    <ligand>
        <name>ATP</name>
        <dbReference type="ChEBI" id="CHEBI:30616"/>
    </ligand>
</feature>
<feature type="binding site" evidence="1">
    <location>
        <position position="32"/>
    </location>
    <ligand>
        <name>AMP</name>
        <dbReference type="ChEBI" id="CHEBI:456215"/>
    </ligand>
</feature>
<feature type="binding site" evidence="1">
    <location>
        <position position="37"/>
    </location>
    <ligand>
        <name>AMP</name>
        <dbReference type="ChEBI" id="CHEBI:456215"/>
    </ligand>
</feature>
<feature type="binding site" evidence="1">
    <location>
        <begin position="58"/>
        <end position="60"/>
    </location>
    <ligand>
        <name>AMP</name>
        <dbReference type="ChEBI" id="CHEBI:456215"/>
    </ligand>
</feature>
<feature type="binding site" evidence="1">
    <location>
        <begin position="86"/>
        <end position="89"/>
    </location>
    <ligand>
        <name>AMP</name>
        <dbReference type="ChEBI" id="CHEBI:456215"/>
    </ligand>
</feature>
<feature type="binding site" evidence="1">
    <location>
        <position position="93"/>
    </location>
    <ligand>
        <name>AMP</name>
        <dbReference type="ChEBI" id="CHEBI:456215"/>
    </ligand>
</feature>
<feature type="binding site" evidence="1">
    <location>
        <position position="128"/>
    </location>
    <ligand>
        <name>ATP</name>
        <dbReference type="ChEBI" id="CHEBI:30616"/>
    </ligand>
</feature>
<feature type="binding site" evidence="1">
    <location>
        <position position="134"/>
    </location>
    <ligand>
        <name>AMP</name>
        <dbReference type="ChEBI" id="CHEBI:456215"/>
    </ligand>
</feature>
<feature type="binding site" evidence="1">
    <location>
        <position position="145"/>
    </location>
    <ligand>
        <name>AMP</name>
        <dbReference type="ChEBI" id="CHEBI:456215"/>
    </ligand>
</feature>
<feature type="binding site" evidence="1">
    <location>
        <position position="173"/>
    </location>
    <ligand>
        <name>ATP</name>
        <dbReference type="ChEBI" id="CHEBI:30616"/>
    </ligand>
</feature>
<sequence length="200" mass="22022">MTRLLIVGPPGAGKGTQAKRIASEYGIPDVSTGDIFRQNIKDRTELGQQVQALVDAGNYVPDELTNRLVTARLQEEDARAGFLLDGYPRTLAQVAYLEELLQGWGQELDAVIQLVADEDEVVARLTRRAAEQGRADDGEEEIRHRQEVYVRETSPLIDVYRERGLLLEVDGLGEVDEVAERIRAALAGRGVRPSSDAGRA</sequence>
<comment type="function">
    <text evidence="1">Catalyzes the reversible transfer of the terminal phosphate group between ATP and AMP. Plays an important role in cellular energy homeostasis and in adenine nucleotide metabolism.</text>
</comment>
<comment type="catalytic activity">
    <reaction evidence="1">
        <text>AMP + ATP = 2 ADP</text>
        <dbReference type="Rhea" id="RHEA:12973"/>
        <dbReference type="ChEBI" id="CHEBI:30616"/>
        <dbReference type="ChEBI" id="CHEBI:456215"/>
        <dbReference type="ChEBI" id="CHEBI:456216"/>
        <dbReference type="EC" id="2.7.4.3"/>
    </reaction>
</comment>
<comment type="pathway">
    <text evidence="1">Purine metabolism; AMP biosynthesis via salvage pathway; AMP from ADP: step 1/1.</text>
</comment>
<comment type="subunit">
    <text evidence="1">Monomer.</text>
</comment>
<comment type="subcellular location">
    <subcellularLocation>
        <location evidence="1">Cytoplasm</location>
    </subcellularLocation>
</comment>
<comment type="domain">
    <text evidence="1">Consists of three domains, a large central CORE domain and two small peripheral domains, NMPbind and LID, which undergo movements during catalysis. The LID domain closes over the site of phosphoryl transfer upon ATP binding. Assembling and dissambling the active center during each catalytic cycle provides an effective means to prevent ATP hydrolysis.</text>
</comment>
<comment type="similarity">
    <text evidence="1">Belongs to the adenylate kinase family.</text>
</comment>
<name>KAD_CLAM3</name>
<protein>
    <recommendedName>
        <fullName evidence="1">Adenylate kinase</fullName>
        <shortName evidence="1">AK</shortName>
        <ecNumber evidence="1">2.7.4.3</ecNumber>
    </recommendedName>
    <alternativeName>
        <fullName evidence="1">ATP-AMP transphosphorylase</fullName>
    </alternativeName>
    <alternativeName>
        <fullName evidence="1">ATP:AMP phosphotransferase</fullName>
    </alternativeName>
    <alternativeName>
        <fullName evidence="1">Adenylate monophosphate kinase</fullName>
    </alternativeName>
</protein>
<accession>A5CU93</accession>
<keyword id="KW-0067">ATP-binding</keyword>
<keyword id="KW-0963">Cytoplasm</keyword>
<keyword id="KW-0418">Kinase</keyword>
<keyword id="KW-0545">Nucleotide biosynthesis</keyword>
<keyword id="KW-0547">Nucleotide-binding</keyword>
<keyword id="KW-0808">Transferase</keyword>
<evidence type="ECO:0000255" key="1">
    <source>
        <dbReference type="HAMAP-Rule" id="MF_00235"/>
    </source>
</evidence>
<gene>
    <name evidence="1" type="primary">adk</name>
    <name type="ordered locus">CMM_2597</name>
</gene>